<proteinExistence type="inferred from homology"/>
<reference key="1">
    <citation type="journal article" date="2007" name="J. Bacteriol.">
        <title>Complete genome sequence of Haemophilus somnus (Histophilus somni) strain 129Pt and comparison to Haemophilus ducreyi 35000HP and Haemophilus influenzae Rd.</title>
        <authorList>
            <person name="Challacombe J.F."/>
            <person name="Duncan A.J."/>
            <person name="Brettin T.S."/>
            <person name="Bruce D."/>
            <person name="Chertkov O."/>
            <person name="Detter J.C."/>
            <person name="Han C.S."/>
            <person name="Misra M."/>
            <person name="Richardson P."/>
            <person name="Tapia R."/>
            <person name="Thayer N."/>
            <person name="Xie G."/>
            <person name="Inzana T.J."/>
        </authorList>
    </citation>
    <scope>NUCLEOTIDE SEQUENCE [LARGE SCALE GENOMIC DNA]</scope>
    <source>
        <strain>129Pt</strain>
    </source>
</reference>
<keyword id="KW-0687">Ribonucleoprotein</keyword>
<keyword id="KW-0689">Ribosomal protein</keyword>
<dbReference type="EMBL" id="CP000436">
    <property type="protein sequence ID" value="ABI24574.1"/>
    <property type="molecule type" value="Genomic_DNA"/>
</dbReference>
<dbReference type="SMR" id="Q0I1J7"/>
<dbReference type="KEGG" id="hso:HS_0296"/>
<dbReference type="eggNOG" id="COG0335">
    <property type="taxonomic scope" value="Bacteria"/>
</dbReference>
<dbReference type="HOGENOM" id="CLU_103507_2_2_6"/>
<dbReference type="GO" id="GO:0022625">
    <property type="term" value="C:cytosolic large ribosomal subunit"/>
    <property type="evidence" value="ECO:0007669"/>
    <property type="project" value="TreeGrafter"/>
</dbReference>
<dbReference type="GO" id="GO:0003735">
    <property type="term" value="F:structural constituent of ribosome"/>
    <property type="evidence" value="ECO:0007669"/>
    <property type="project" value="InterPro"/>
</dbReference>
<dbReference type="GO" id="GO:0006412">
    <property type="term" value="P:translation"/>
    <property type="evidence" value="ECO:0007669"/>
    <property type="project" value="UniProtKB-UniRule"/>
</dbReference>
<dbReference type="FunFam" id="2.30.30.790:FF:000001">
    <property type="entry name" value="50S ribosomal protein L19"/>
    <property type="match status" value="1"/>
</dbReference>
<dbReference type="Gene3D" id="2.30.30.790">
    <property type="match status" value="1"/>
</dbReference>
<dbReference type="HAMAP" id="MF_00402">
    <property type="entry name" value="Ribosomal_bL19"/>
    <property type="match status" value="1"/>
</dbReference>
<dbReference type="InterPro" id="IPR001857">
    <property type="entry name" value="Ribosomal_bL19"/>
</dbReference>
<dbReference type="InterPro" id="IPR018257">
    <property type="entry name" value="Ribosomal_bL19_CS"/>
</dbReference>
<dbReference type="InterPro" id="IPR038657">
    <property type="entry name" value="Ribosomal_bL19_sf"/>
</dbReference>
<dbReference type="InterPro" id="IPR008991">
    <property type="entry name" value="Translation_prot_SH3-like_sf"/>
</dbReference>
<dbReference type="NCBIfam" id="TIGR01024">
    <property type="entry name" value="rplS_bact"/>
    <property type="match status" value="1"/>
</dbReference>
<dbReference type="PANTHER" id="PTHR15680:SF9">
    <property type="entry name" value="LARGE RIBOSOMAL SUBUNIT PROTEIN BL19M"/>
    <property type="match status" value="1"/>
</dbReference>
<dbReference type="PANTHER" id="PTHR15680">
    <property type="entry name" value="RIBOSOMAL PROTEIN L19"/>
    <property type="match status" value="1"/>
</dbReference>
<dbReference type="Pfam" id="PF01245">
    <property type="entry name" value="Ribosomal_L19"/>
    <property type="match status" value="1"/>
</dbReference>
<dbReference type="PIRSF" id="PIRSF002191">
    <property type="entry name" value="Ribosomal_L19"/>
    <property type="match status" value="1"/>
</dbReference>
<dbReference type="PRINTS" id="PR00061">
    <property type="entry name" value="RIBOSOMALL19"/>
</dbReference>
<dbReference type="SUPFAM" id="SSF50104">
    <property type="entry name" value="Translation proteins SH3-like domain"/>
    <property type="match status" value="1"/>
</dbReference>
<dbReference type="PROSITE" id="PS01015">
    <property type="entry name" value="RIBOSOMAL_L19"/>
    <property type="match status" value="1"/>
</dbReference>
<organism>
    <name type="scientific">Histophilus somni (strain 129Pt)</name>
    <name type="common">Haemophilus somnus</name>
    <dbReference type="NCBI Taxonomy" id="205914"/>
    <lineage>
        <taxon>Bacteria</taxon>
        <taxon>Pseudomonadati</taxon>
        <taxon>Pseudomonadota</taxon>
        <taxon>Gammaproteobacteria</taxon>
        <taxon>Pasteurellales</taxon>
        <taxon>Pasteurellaceae</taxon>
        <taxon>Histophilus</taxon>
    </lineage>
</organism>
<comment type="function">
    <text evidence="1">This protein is located at the 30S-50S ribosomal subunit interface and may play a role in the structure and function of the aminoacyl-tRNA binding site.</text>
</comment>
<comment type="similarity">
    <text evidence="1">Belongs to the bacterial ribosomal protein bL19 family.</text>
</comment>
<sequence length="116" mass="13236">MSNIIKQIEQEQLKQNVPSFRPGDTLEVKVWVVEGSKRRLQAFEGVVIAIRHRGLHSAFTLRKISNGVGVERVFQTHSPIIDSITVKRKGAVRKAKLYYLRERSGKSARIKERLGN</sequence>
<accession>Q0I1J7</accession>
<name>RL19_HISS1</name>
<gene>
    <name evidence="1" type="primary">rplS</name>
    <name type="ordered locus">HS_0296</name>
</gene>
<protein>
    <recommendedName>
        <fullName evidence="1">Large ribosomal subunit protein bL19</fullName>
    </recommendedName>
    <alternativeName>
        <fullName evidence="2">50S ribosomal protein L19</fullName>
    </alternativeName>
</protein>
<evidence type="ECO:0000255" key="1">
    <source>
        <dbReference type="HAMAP-Rule" id="MF_00402"/>
    </source>
</evidence>
<evidence type="ECO:0000305" key="2"/>
<feature type="chain" id="PRO_1000049685" description="Large ribosomal subunit protein bL19">
    <location>
        <begin position="1"/>
        <end position="116"/>
    </location>
</feature>